<reference key="1">
    <citation type="journal article" date="2007" name="Nat. Biotechnol.">
        <title>Complete genome sequence of the erythromycin-producing bacterium Saccharopolyspora erythraea NRRL23338.</title>
        <authorList>
            <person name="Oliynyk M."/>
            <person name="Samborskyy M."/>
            <person name="Lester J.B."/>
            <person name="Mironenko T."/>
            <person name="Scott N."/>
            <person name="Dickens S."/>
            <person name="Haydock S.F."/>
            <person name="Leadlay P.F."/>
        </authorList>
    </citation>
    <scope>NUCLEOTIDE SEQUENCE [LARGE SCALE GENOMIC DNA]</scope>
    <source>
        <strain>ATCC 11635 / DSM 40517 / JCM 4748 / NBRC 13426 / NCIMB 8594 / NRRL 2338</strain>
    </source>
</reference>
<organism>
    <name type="scientific">Saccharopolyspora erythraea (strain ATCC 11635 / DSM 40517 / JCM 4748 / NBRC 13426 / NCIMB 8594 / NRRL 2338)</name>
    <dbReference type="NCBI Taxonomy" id="405948"/>
    <lineage>
        <taxon>Bacteria</taxon>
        <taxon>Bacillati</taxon>
        <taxon>Actinomycetota</taxon>
        <taxon>Actinomycetes</taxon>
        <taxon>Pseudonocardiales</taxon>
        <taxon>Pseudonocardiaceae</taxon>
        <taxon>Saccharopolyspora</taxon>
    </lineage>
</organism>
<name>RL24_SACEN</name>
<proteinExistence type="inferred from homology"/>
<sequence>MKVKKGDTVVVISGKDKGAKGKVIQAFPQRDKVLVEGVNRIKKHTKVSRTERGAQSGGIVTQEAPIHVSNVMVVDSDGQPTRVGYRIGEDGKKVRISRRNGKDI</sequence>
<gene>
    <name evidence="1" type="primary">rplX</name>
    <name type="ordered locus">SACE_6825</name>
</gene>
<protein>
    <recommendedName>
        <fullName evidence="1">Large ribosomal subunit protein uL24</fullName>
    </recommendedName>
    <alternativeName>
        <fullName evidence="2">50S ribosomal protein L24</fullName>
    </alternativeName>
</protein>
<keyword id="KW-1185">Reference proteome</keyword>
<keyword id="KW-0687">Ribonucleoprotein</keyword>
<keyword id="KW-0689">Ribosomal protein</keyword>
<keyword id="KW-0694">RNA-binding</keyword>
<keyword id="KW-0699">rRNA-binding</keyword>
<accession>A4FPL4</accession>
<evidence type="ECO:0000255" key="1">
    <source>
        <dbReference type="HAMAP-Rule" id="MF_01326"/>
    </source>
</evidence>
<evidence type="ECO:0000305" key="2"/>
<dbReference type="EMBL" id="AM420293">
    <property type="protein sequence ID" value="CAM05989.1"/>
    <property type="molecule type" value="Genomic_DNA"/>
</dbReference>
<dbReference type="RefSeq" id="WP_009948642.1">
    <property type="nucleotide sequence ID" value="NC_009142.1"/>
</dbReference>
<dbReference type="SMR" id="A4FPL4"/>
<dbReference type="STRING" id="405948.SACE_6825"/>
<dbReference type="KEGG" id="sen:SACE_6825"/>
<dbReference type="eggNOG" id="COG0198">
    <property type="taxonomic scope" value="Bacteria"/>
</dbReference>
<dbReference type="HOGENOM" id="CLU_093315_2_0_11"/>
<dbReference type="OrthoDB" id="9807419at2"/>
<dbReference type="Proteomes" id="UP000006728">
    <property type="component" value="Chromosome"/>
</dbReference>
<dbReference type="GO" id="GO:1990904">
    <property type="term" value="C:ribonucleoprotein complex"/>
    <property type="evidence" value="ECO:0007669"/>
    <property type="project" value="UniProtKB-KW"/>
</dbReference>
<dbReference type="GO" id="GO:0005840">
    <property type="term" value="C:ribosome"/>
    <property type="evidence" value="ECO:0007669"/>
    <property type="project" value="UniProtKB-KW"/>
</dbReference>
<dbReference type="GO" id="GO:0019843">
    <property type="term" value="F:rRNA binding"/>
    <property type="evidence" value="ECO:0007669"/>
    <property type="project" value="UniProtKB-UniRule"/>
</dbReference>
<dbReference type="GO" id="GO:0003735">
    <property type="term" value="F:structural constituent of ribosome"/>
    <property type="evidence" value="ECO:0007669"/>
    <property type="project" value="InterPro"/>
</dbReference>
<dbReference type="GO" id="GO:0006412">
    <property type="term" value="P:translation"/>
    <property type="evidence" value="ECO:0007669"/>
    <property type="project" value="UniProtKB-UniRule"/>
</dbReference>
<dbReference type="CDD" id="cd06089">
    <property type="entry name" value="KOW_RPL26"/>
    <property type="match status" value="1"/>
</dbReference>
<dbReference type="FunFam" id="2.30.30.30:FF:000004">
    <property type="entry name" value="50S ribosomal protein L24"/>
    <property type="match status" value="1"/>
</dbReference>
<dbReference type="Gene3D" id="2.30.30.30">
    <property type="match status" value="1"/>
</dbReference>
<dbReference type="HAMAP" id="MF_01326_B">
    <property type="entry name" value="Ribosomal_uL24_B"/>
    <property type="match status" value="1"/>
</dbReference>
<dbReference type="InterPro" id="IPR005824">
    <property type="entry name" value="KOW"/>
</dbReference>
<dbReference type="InterPro" id="IPR014722">
    <property type="entry name" value="Rib_uL2_dom2"/>
</dbReference>
<dbReference type="InterPro" id="IPR003256">
    <property type="entry name" value="Ribosomal_uL24"/>
</dbReference>
<dbReference type="InterPro" id="IPR005825">
    <property type="entry name" value="Ribosomal_uL24_CS"/>
</dbReference>
<dbReference type="InterPro" id="IPR041988">
    <property type="entry name" value="Ribosomal_uL24_KOW"/>
</dbReference>
<dbReference type="InterPro" id="IPR008991">
    <property type="entry name" value="Translation_prot_SH3-like_sf"/>
</dbReference>
<dbReference type="NCBIfam" id="TIGR01079">
    <property type="entry name" value="rplX_bact"/>
    <property type="match status" value="1"/>
</dbReference>
<dbReference type="PANTHER" id="PTHR12903">
    <property type="entry name" value="MITOCHONDRIAL RIBOSOMAL PROTEIN L24"/>
    <property type="match status" value="1"/>
</dbReference>
<dbReference type="Pfam" id="PF00467">
    <property type="entry name" value="KOW"/>
    <property type="match status" value="1"/>
</dbReference>
<dbReference type="Pfam" id="PF17136">
    <property type="entry name" value="ribosomal_L24"/>
    <property type="match status" value="1"/>
</dbReference>
<dbReference type="SMART" id="SM00739">
    <property type="entry name" value="KOW"/>
    <property type="match status" value="1"/>
</dbReference>
<dbReference type="SUPFAM" id="SSF50104">
    <property type="entry name" value="Translation proteins SH3-like domain"/>
    <property type="match status" value="1"/>
</dbReference>
<dbReference type="PROSITE" id="PS01108">
    <property type="entry name" value="RIBOSOMAL_L24"/>
    <property type="match status" value="1"/>
</dbReference>
<feature type="chain" id="PRO_1000052301" description="Large ribosomal subunit protein uL24">
    <location>
        <begin position="1"/>
        <end position="104"/>
    </location>
</feature>
<comment type="function">
    <text evidence="1">One of two assembly initiator proteins, it binds directly to the 5'-end of the 23S rRNA, where it nucleates assembly of the 50S subunit.</text>
</comment>
<comment type="function">
    <text evidence="1">One of the proteins that surrounds the polypeptide exit tunnel on the outside of the subunit.</text>
</comment>
<comment type="subunit">
    <text evidence="1">Part of the 50S ribosomal subunit.</text>
</comment>
<comment type="similarity">
    <text evidence="1">Belongs to the universal ribosomal protein uL24 family.</text>
</comment>